<sequence>MNNIPDDFKKIASSSRLPRKYCSSESSLSDDDGHEIEHVLKHGAPEEALTPDTERMVVLGQDVVQSAPASLVPGGNLSWMSKIKSAGASMMGSIRPSSSSQDVHSTGEIEKHSKKKWKARLWSTWNNIKYSSTWMSDRSDEYGGENDVVFLGRRYSTSVDESGLRSGFENFCSDYYSRLWITYRTDFPALLDTDTTTDCGWGCMIRTTQMMVAQAIMVNRFGRDWRFTRRKRSHVAAHGDEDDFDREKIQEWMILKLFEDKPTAPLGIHKMVGIAAMGKGKKAVGSWYSPSEAVFIMKKALTESSSPLTGNTAMLLSIDGRVHIRDIEVETKNWMKKLILVIVVRLGAAELNPIYVPHLMRLFAMESCLGITGGRPDHSSWFVGYYGDQIIYLDPHVAHEYIPIDINPNTNVVDSDSKKAKKCPEKSYHCRLLSKMHFFDMDPSCALCFQFESREQFDNDMRQLNLSQFIDIDQGEEHGMKRVRDPMFSVVYGERRQPPSYEREVSETEQAQADKHGFEML</sequence>
<accession>Q9U1N6</accession>
<organism evidence="8">
    <name type="scientific">Caenorhabditis elegans</name>
    <dbReference type="NCBI Taxonomy" id="6239"/>
    <lineage>
        <taxon>Eukaryota</taxon>
        <taxon>Metazoa</taxon>
        <taxon>Ecdysozoa</taxon>
        <taxon>Nematoda</taxon>
        <taxon>Chromadorea</taxon>
        <taxon>Rhabditida</taxon>
        <taxon>Rhabditina</taxon>
        <taxon>Rhabditomorpha</taxon>
        <taxon>Rhabditoidea</taxon>
        <taxon>Rhabditidae</taxon>
        <taxon>Peloderinae</taxon>
        <taxon>Caenorhabditis</taxon>
    </lineage>
</organism>
<protein>
    <recommendedName>
        <fullName evidence="6">Cysteine protease atg-4.2</fullName>
        <ecNumber evidence="2 4">3.4.22.-</ecNumber>
    </recommendedName>
    <alternativeName>
        <fullName evidence="6">Autophagy-related protein 4 homolog 2</fullName>
    </alternativeName>
</protein>
<feature type="chain" id="PRO_0000448584" description="Cysteine protease atg-4.2">
    <location>
        <begin position="1"/>
        <end position="521"/>
    </location>
</feature>
<feature type="region of interest" description="Disordered" evidence="3">
    <location>
        <begin position="90"/>
        <end position="109"/>
    </location>
</feature>
<feature type="region of interest" description="Disordered" evidence="3">
    <location>
        <begin position="499"/>
        <end position="521"/>
    </location>
</feature>
<feature type="compositionally biased region" description="Low complexity" evidence="3">
    <location>
        <begin position="90"/>
        <end position="100"/>
    </location>
</feature>
<feature type="active site" description="Nucleophile" evidence="1">
    <location>
        <position position="203"/>
    </location>
</feature>
<feature type="active site" evidence="1">
    <location>
        <position position="394"/>
    </location>
</feature>
<feature type="active site" evidence="1">
    <location>
        <position position="396"/>
    </location>
</feature>
<feature type="mutagenesis site" description="In gk430078; increases the number of lgg-1-containing protein aggregates in neuronal cell bodies, but not neurites, of AIY interneurons." evidence="5">
    <location>
        <begin position="84"/>
        <end position="521"/>
    </location>
</feature>
<feature type="mutagenesis site" description="In gk628327; increases the number of lgg-1-containing protein aggregates in neuronal cell bodies, but not neurites, of AIY interneurons. Increases the number of lgg-1-containing protein aggregates in neurites of AIY interneurons in a unc-16 ju146 mutant background." evidence="5">
    <location>
        <begin position="201"/>
        <end position="521"/>
    </location>
</feature>
<feature type="mutagenesis site" description="In ola316; defective maturation of autophagosomes with increased numbers of immature autophagic vacuoles. Increases the number of lgg-1-containing protein aggregates in neuronal cell bodies, but not neurites, of AIY interneurons. Increases the number of lgg-1-containing protein aggregates in neurites of AIY interneurons in a unc-16 ju146 mutant background." evidence="5">
    <original>G</original>
    <variation>R</variation>
    <location>
        <position position="373"/>
    </location>
</feature>
<gene>
    <name evidence="9" type="primary">atg-4.2</name>
    <name evidence="9" type="ORF">ZK792.8</name>
</gene>
<proteinExistence type="evidence at protein level"/>
<reference evidence="8" key="1">
    <citation type="journal article" date="1998" name="Science">
        <title>Genome sequence of the nematode C. elegans: a platform for investigating biology.</title>
        <authorList>
            <consortium name="The C. elegans sequencing consortium"/>
        </authorList>
    </citation>
    <scope>NUCLEOTIDE SEQUENCE [LARGE SCALE GENOMIC DNA]</scope>
    <source>
        <strain evidence="8">Bristol N2</strain>
    </source>
</reference>
<reference evidence="6" key="2">
    <citation type="journal article" date="2012" name="J. Biol. Chem.">
        <title>Differential function of the two Atg4 homologues in the aggrephagy pathway in Caenorhabditis elegans.</title>
        <authorList>
            <person name="Wu F."/>
            <person name="Li Y."/>
            <person name="Wang F."/>
            <person name="Noda N.N."/>
            <person name="Zhang H."/>
        </authorList>
    </citation>
    <scope>FUNCTION</scope>
    <scope>CATALYTIC ACTIVITY</scope>
    <scope>BIOPHYSICOCHEMICAL PROPERTIES</scope>
</reference>
<reference evidence="6" key="3">
    <citation type="journal article" date="2019" name="Dev. Cell">
        <title>Maturation and Clearance of Autophagosomes in Neurons Depends on a Specific Cysteine Protease Isoform, ATG-4.2.</title>
        <authorList>
            <person name="Hill S.E."/>
            <person name="Kauffman K.J."/>
            <person name="Krout M."/>
            <person name="Richmond J.E."/>
            <person name="Melia T.J."/>
            <person name="Colon-Ramos D.A."/>
        </authorList>
    </citation>
    <scope>FUNCTION</scope>
    <scope>SUBCELLULAR LOCATION</scope>
    <scope>MUTAGENESIS OF 84-LYS--LEU-521; 201-TRP--LEU-521 AND GLY-373</scope>
</reference>
<comment type="function">
    <text evidence="4 5 7">Cysteine protease required for autophagy (PubMed:22767594, PubMed:30880001). Cleaves the C-terminal amino acid of ATG8 family proteins lgg-1, to reveal a C-terminal glycine (Probable). Exposure of the glycine at the C-terminus is essential for ATG8 proteins conjugation to phosphatidylethanolamine (PE) and insertion to membranes, which is necessary for autophagy (Probable). Its cleavage activity is functionally redundant to atg-4.1, but it cleaves lgg-1 precursors less efficiently than atg-4.1 (Probable). In contrast to atg-4.1, plays a more significant role in the later phases of autophagy and in addition has a role in autophagosome maturation (PubMed:30880001). Acts redundantly with atg-4.1 to promote the lgg-1 delipidation to release the protein from membranes, which facilitates multiple events during macroautophagy (PubMed:30880001). Regulates the accumulation of autophagic structures in neurons and is specifically, required for the maturation and elimination of autophagosomes from the synaptic region of AIY interneurons (PubMed:30880001).</text>
</comment>
<comment type="catalytic activity">
    <reaction evidence="1">
        <text>[protein]-C-terminal L-amino acid-glycyl-phosphatidylethanolamide + H2O = [protein]-C-terminal L-amino acid-glycine + a 1,2-diacyl-sn-glycero-3-phosphoethanolamine</text>
        <dbReference type="Rhea" id="RHEA:67548"/>
        <dbReference type="Rhea" id="RHEA-COMP:17323"/>
        <dbReference type="Rhea" id="RHEA-COMP:17324"/>
        <dbReference type="ChEBI" id="CHEBI:15377"/>
        <dbReference type="ChEBI" id="CHEBI:64612"/>
        <dbReference type="ChEBI" id="CHEBI:172940"/>
        <dbReference type="ChEBI" id="CHEBI:172941"/>
    </reaction>
    <physiologicalReaction direction="left-to-right" evidence="1">
        <dbReference type="Rhea" id="RHEA:67549"/>
    </physiologicalReaction>
</comment>
<comment type="biophysicochemical properties">
    <kinetics>
        <KM evidence="4">20.7 uM for lgg-1</KM>
    </kinetics>
</comment>
<comment type="subcellular location">
    <subcellularLocation>
        <location evidence="2 5">Cytoplasm</location>
    </subcellularLocation>
</comment>
<comment type="similarity">
    <text evidence="2">Belongs to the peptidase C54 family.</text>
</comment>
<dbReference type="EC" id="3.4.22.-" evidence="2 4"/>
<dbReference type="EMBL" id="BX284604">
    <property type="protein sequence ID" value="CAB54515.1"/>
    <property type="molecule type" value="Genomic_DNA"/>
</dbReference>
<dbReference type="PIR" id="T27996">
    <property type="entry name" value="T27996"/>
</dbReference>
<dbReference type="RefSeq" id="NP_502208.1">
    <property type="nucleotide sequence ID" value="NM_069807.4"/>
</dbReference>
<dbReference type="SMR" id="Q9U1N6"/>
<dbReference type="FunCoup" id="Q9U1N6">
    <property type="interactions" value="1329"/>
</dbReference>
<dbReference type="IntAct" id="Q9U1N6">
    <property type="interactions" value="1"/>
</dbReference>
<dbReference type="STRING" id="6239.ZK792.8.1"/>
<dbReference type="MEROPS" id="C54.009"/>
<dbReference type="PaxDb" id="6239-ZK792.8"/>
<dbReference type="PeptideAtlas" id="Q9U1N6"/>
<dbReference type="EnsemblMetazoa" id="ZK792.8.1">
    <property type="protein sequence ID" value="ZK792.8.1"/>
    <property type="gene ID" value="WBGene00014080"/>
</dbReference>
<dbReference type="GeneID" id="3565022"/>
<dbReference type="KEGG" id="cel:CELE_ZK792.8"/>
<dbReference type="UCSC" id="ZK792.8">
    <property type="organism name" value="c. elegans"/>
</dbReference>
<dbReference type="AGR" id="WB:WBGene00014080"/>
<dbReference type="CTD" id="3565022"/>
<dbReference type="WormBase" id="ZK792.8">
    <property type="protein sequence ID" value="CE24740"/>
    <property type="gene ID" value="WBGene00014080"/>
    <property type="gene designation" value="atg-4.2"/>
</dbReference>
<dbReference type="eggNOG" id="KOG2674">
    <property type="taxonomic scope" value="Eukaryota"/>
</dbReference>
<dbReference type="GeneTree" id="ENSGT00530000063000"/>
<dbReference type="HOGENOM" id="CLU_523002_0_0_1"/>
<dbReference type="InParanoid" id="Q9U1N6"/>
<dbReference type="OMA" id="MPRDWAW"/>
<dbReference type="OrthoDB" id="2960936at2759"/>
<dbReference type="PhylomeDB" id="Q9U1N6"/>
<dbReference type="Reactome" id="R-CEL-1632852">
    <property type="pathway name" value="Macroautophagy"/>
</dbReference>
<dbReference type="PRO" id="PR:Q9U1N6"/>
<dbReference type="Proteomes" id="UP000001940">
    <property type="component" value="Chromosome IV"/>
</dbReference>
<dbReference type="Bgee" id="WBGene00014080">
    <property type="expression patterns" value="Expressed in embryo and 4 other cell types or tissues"/>
</dbReference>
<dbReference type="GO" id="GO:0005737">
    <property type="term" value="C:cytoplasm"/>
    <property type="evidence" value="ECO:0000318"/>
    <property type="project" value="GO_Central"/>
</dbReference>
<dbReference type="GO" id="GO:0004197">
    <property type="term" value="F:cysteine-type endopeptidase activity"/>
    <property type="evidence" value="ECO:0000314"/>
    <property type="project" value="WormBase"/>
</dbReference>
<dbReference type="GO" id="GO:0019786">
    <property type="term" value="F:protein-phosphatidylethanolamide deconjugating activity"/>
    <property type="evidence" value="ECO:0000318"/>
    <property type="project" value="GO_Central"/>
</dbReference>
<dbReference type="GO" id="GO:0035973">
    <property type="term" value="P:aggrephagy"/>
    <property type="evidence" value="ECO:0000318"/>
    <property type="project" value="GO_Central"/>
</dbReference>
<dbReference type="GO" id="GO:0000045">
    <property type="term" value="P:autophagosome assembly"/>
    <property type="evidence" value="ECO:0000318"/>
    <property type="project" value="GO_Central"/>
</dbReference>
<dbReference type="GO" id="GO:0000423">
    <property type="term" value="P:mitophagy"/>
    <property type="evidence" value="ECO:0000318"/>
    <property type="project" value="GO_Central"/>
</dbReference>
<dbReference type="GO" id="GO:0034727">
    <property type="term" value="P:piecemeal microautophagy of the nucleus"/>
    <property type="evidence" value="ECO:0000318"/>
    <property type="project" value="GO_Central"/>
</dbReference>
<dbReference type="GO" id="GO:0016485">
    <property type="term" value="P:protein processing"/>
    <property type="evidence" value="ECO:0000318"/>
    <property type="project" value="GO_Central"/>
</dbReference>
<dbReference type="GO" id="GO:0015031">
    <property type="term" value="P:protein transport"/>
    <property type="evidence" value="ECO:0007669"/>
    <property type="project" value="UniProtKB-KW"/>
</dbReference>
<dbReference type="InterPro" id="IPR038765">
    <property type="entry name" value="Papain-like_cys_pep_sf"/>
</dbReference>
<dbReference type="InterPro" id="IPR005078">
    <property type="entry name" value="Peptidase_C54"/>
</dbReference>
<dbReference type="InterPro" id="IPR046792">
    <property type="entry name" value="Peptidase_C54_cat"/>
</dbReference>
<dbReference type="PANTHER" id="PTHR22624:SF52">
    <property type="entry name" value="CYSTEINE PROTEASE"/>
    <property type="match status" value="1"/>
</dbReference>
<dbReference type="PANTHER" id="PTHR22624">
    <property type="entry name" value="CYSTEINE PROTEASE ATG4"/>
    <property type="match status" value="1"/>
</dbReference>
<dbReference type="Pfam" id="PF03416">
    <property type="entry name" value="Peptidase_C54"/>
    <property type="match status" value="1"/>
</dbReference>
<dbReference type="SUPFAM" id="SSF54001">
    <property type="entry name" value="Cysteine proteinases"/>
    <property type="match status" value="1"/>
</dbReference>
<name>ATG42_CAEEL</name>
<keyword id="KW-0072">Autophagy</keyword>
<keyword id="KW-0963">Cytoplasm</keyword>
<keyword id="KW-0378">Hydrolase</keyword>
<keyword id="KW-0645">Protease</keyword>
<keyword id="KW-0653">Protein transport</keyword>
<keyword id="KW-1185">Reference proteome</keyword>
<keyword id="KW-0788">Thiol protease</keyword>
<keyword id="KW-0813">Transport</keyword>
<evidence type="ECO:0000250" key="1">
    <source>
        <dbReference type="UniProtKB" id="Q9Y4P1"/>
    </source>
</evidence>
<evidence type="ECO:0000255" key="2">
    <source>
        <dbReference type="RuleBase" id="RU363115"/>
    </source>
</evidence>
<evidence type="ECO:0000256" key="3">
    <source>
        <dbReference type="SAM" id="MobiDB-lite"/>
    </source>
</evidence>
<evidence type="ECO:0000269" key="4">
    <source>
    </source>
</evidence>
<evidence type="ECO:0000269" key="5">
    <source>
    </source>
</evidence>
<evidence type="ECO:0000305" key="6"/>
<evidence type="ECO:0000305" key="7">
    <source>
    </source>
</evidence>
<evidence type="ECO:0000312" key="8">
    <source>
        <dbReference type="Proteomes" id="UP000001940"/>
    </source>
</evidence>
<evidence type="ECO:0000312" key="9">
    <source>
        <dbReference type="WormBase" id="ZK792.8"/>
    </source>
</evidence>